<gene>
    <name evidence="1" type="primary">ftsH2</name>
    <name type="ordered locus">ATP_00273</name>
</gene>
<organism>
    <name type="scientific">Phytoplasma mali (strain AT)</name>
    <dbReference type="NCBI Taxonomy" id="482235"/>
    <lineage>
        <taxon>Bacteria</taxon>
        <taxon>Bacillati</taxon>
        <taxon>Mycoplasmatota</taxon>
        <taxon>Mollicutes</taxon>
        <taxon>Acholeplasmatales</taxon>
        <taxon>Acholeplasmataceae</taxon>
        <taxon>Candidatus Phytoplasma</taxon>
        <taxon>16SrX (Apple proliferation group)</taxon>
    </lineage>
</organism>
<feature type="chain" id="PRO_0000400376" description="ATP-dependent zinc metalloprotease FtsH 2">
    <location>
        <begin position="1"/>
        <end position="686"/>
    </location>
</feature>
<feature type="topological domain" description="Cytoplasmic" evidence="1">
    <location>
        <begin position="1"/>
        <end position="11"/>
    </location>
</feature>
<feature type="transmembrane region" description="Helical" evidence="1">
    <location>
        <begin position="12"/>
        <end position="32"/>
    </location>
</feature>
<feature type="topological domain" description="Extracellular" evidence="1">
    <location>
        <begin position="33"/>
        <end position="178"/>
    </location>
</feature>
<feature type="transmembrane region" description="Helical" evidence="1">
    <location>
        <begin position="179"/>
        <end position="199"/>
    </location>
</feature>
<feature type="topological domain" description="Cytoplasmic" evidence="1">
    <location>
        <begin position="200"/>
        <end position="686"/>
    </location>
</feature>
<feature type="active site" evidence="1">
    <location>
        <position position="494"/>
    </location>
</feature>
<feature type="binding site" evidence="1">
    <location>
        <begin position="272"/>
        <end position="279"/>
    </location>
    <ligand>
        <name>ATP</name>
        <dbReference type="ChEBI" id="CHEBI:30616"/>
    </ligand>
</feature>
<feature type="binding site" evidence="1">
    <location>
        <position position="493"/>
    </location>
    <ligand>
        <name>Zn(2+)</name>
        <dbReference type="ChEBI" id="CHEBI:29105"/>
        <note>catalytic</note>
    </ligand>
</feature>
<feature type="binding site" evidence="1">
    <location>
        <position position="497"/>
    </location>
    <ligand>
        <name>Zn(2+)</name>
        <dbReference type="ChEBI" id="CHEBI:29105"/>
        <note>catalytic</note>
    </ligand>
</feature>
<feature type="binding site" evidence="1">
    <location>
        <position position="569"/>
    </location>
    <ligand>
        <name>Zn(2+)</name>
        <dbReference type="ChEBI" id="CHEBI:29105"/>
        <note>catalytic</note>
    </ligand>
</feature>
<evidence type="ECO:0000255" key="1">
    <source>
        <dbReference type="HAMAP-Rule" id="MF_01458"/>
    </source>
</evidence>
<proteinExistence type="inferred from homology"/>
<sequence>MKKNIKDIFKNFNIFWFCFIFLLLSLLYCLIMMEISHQHDNNKPSEIIAVLKEIKELQTKSTEESKKESKESKESKEDKTKIIKIKKFDIHETSNYGSYLIVFQWGTGNKDSFEWEKELKFPNVDQETYKEIMKICFEIIGTPIDKKDNITNLSQMITKIKEKTNLIPLQRIPYQPYFGFAPFISAVNICILIIIFYFIYNSIEKTSAQISGKNLNISRQKVLVNQQEFTFKDIAGADEEKEEMSELINFLKNPFKYEAMGARIPKGVLLYGPPGVGKTLLAKAVAGEAKVPFFAVSGSDFIEVYVGLGASRIRKLFNEAKQNAPCIIFIDEIETISHQRGSVNYSNSEHDQTLNQLLVEMDGFTKNIGVIVMAATNQPESLDLAVTRPGRFDRHFHITLPSVKDREAILKLHARNKKFNDDVDFESLAKQTPGFNGAQLEAILNESALLATRRNVLVICNEDISEALDRVLMGPSKKSKKYNDKEKRMVAYHESGHAVIGLKLPEADQIQKVTIIPRGNAGGYNLTLPQEETFFSSKKRLLAQITSFLGGRAAEEVVFQDVSNGAYSDFKYATEIAKKMVTQYGMSDLGPIQYMENNFYKNFSDSKAVEIDKEIQKIIDYCYQNAKKIITENRDLLDLISKYLLEIETITQKDLEEILNTGIIEWWEKDKLKKNLQKSEKEDCNK</sequence>
<name>FTSH2_PHYMT</name>
<reference key="1">
    <citation type="journal article" date="2008" name="BMC Genomics">
        <title>The linear chromosome of the plant-pathogenic mycoplasma 'Candidatus Phytoplasma mali'.</title>
        <authorList>
            <person name="Kube M."/>
            <person name="Schneider B."/>
            <person name="Kuhl H."/>
            <person name="Dandekar T."/>
            <person name="Heitmann K."/>
            <person name="Migdoll A.M."/>
            <person name="Reinhardt R."/>
            <person name="Seemueller E."/>
        </authorList>
    </citation>
    <scope>NUCLEOTIDE SEQUENCE [LARGE SCALE GENOMIC DNA]</scope>
    <source>
        <strain>AT</strain>
    </source>
</reference>
<keyword id="KW-0067">ATP-binding</keyword>
<keyword id="KW-1003">Cell membrane</keyword>
<keyword id="KW-0378">Hydrolase</keyword>
<keyword id="KW-0472">Membrane</keyword>
<keyword id="KW-0479">Metal-binding</keyword>
<keyword id="KW-0482">Metalloprotease</keyword>
<keyword id="KW-0547">Nucleotide-binding</keyword>
<keyword id="KW-0645">Protease</keyword>
<keyword id="KW-1185">Reference proteome</keyword>
<keyword id="KW-0812">Transmembrane</keyword>
<keyword id="KW-1133">Transmembrane helix</keyword>
<keyword id="KW-0862">Zinc</keyword>
<protein>
    <recommendedName>
        <fullName evidence="1">ATP-dependent zinc metalloprotease FtsH 2</fullName>
        <ecNumber evidence="1">3.4.24.-</ecNumber>
    </recommendedName>
</protein>
<comment type="function">
    <text evidence="1">Acts as a processive, ATP-dependent zinc metallopeptidase for both cytoplasmic and membrane proteins. Plays a role in the quality control of integral membrane proteins.</text>
</comment>
<comment type="cofactor">
    <cofactor evidence="1">
        <name>Zn(2+)</name>
        <dbReference type="ChEBI" id="CHEBI:29105"/>
    </cofactor>
    <text evidence="1">Binds 1 zinc ion per subunit.</text>
</comment>
<comment type="subunit">
    <text evidence="1">Homohexamer.</text>
</comment>
<comment type="subcellular location">
    <subcellularLocation>
        <location evidence="1">Cell membrane</location>
        <topology evidence="1">Multi-pass membrane protein</topology>
        <orientation evidence="1">Cytoplasmic side</orientation>
    </subcellularLocation>
</comment>
<comment type="similarity">
    <text evidence="1">In the central section; belongs to the AAA ATPase family.</text>
</comment>
<comment type="similarity">
    <text evidence="1">In the C-terminal section; belongs to the peptidase M41 family.</text>
</comment>
<dbReference type="EC" id="3.4.24.-" evidence="1"/>
<dbReference type="EMBL" id="CU469464">
    <property type="protein sequence ID" value="CAP18460.1"/>
    <property type="molecule type" value="Genomic_DNA"/>
</dbReference>
<dbReference type="SMR" id="B3QZS3"/>
<dbReference type="STRING" id="37692.ATP_00273"/>
<dbReference type="MEROPS" id="M41.009"/>
<dbReference type="KEGG" id="pml:ATP_00273"/>
<dbReference type="eggNOG" id="COG0465">
    <property type="taxonomic scope" value="Bacteria"/>
</dbReference>
<dbReference type="HOGENOM" id="CLU_000688_16_2_14"/>
<dbReference type="Proteomes" id="UP000002020">
    <property type="component" value="Chromosome"/>
</dbReference>
<dbReference type="GO" id="GO:0005886">
    <property type="term" value="C:plasma membrane"/>
    <property type="evidence" value="ECO:0007669"/>
    <property type="project" value="UniProtKB-SubCell"/>
</dbReference>
<dbReference type="GO" id="GO:0005524">
    <property type="term" value="F:ATP binding"/>
    <property type="evidence" value="ECO:0007669"/>
    <property type="project" value="UniProtKB-UniRule"/>
</dbReference>
<dbReference type="GO" id="GO:0016887">
    <property type="term" value="F:ATP hydrolysis activity"/>
    <property type="evidence" value="ECO:0007669"/>
    <property type="project" value="UniProtKB-UniRule"/>
</dbReference>
<dbReference type="GO" id="GO:0004176">
    <property type="term" value="F:ATP-dependent peptidase activity"/>
    <property type="evidence" value="ECO:0007669"/>
    <property type="project" value="InterPro"/>
</dbReference>
<dbReference type="GO" id="GO:0004222">
    <property type="term" value="F:metalloendopeptidase activity"/>
    <property type="evidence" value="ECO:0007669"/>
    <property type="project" value="InterPro"/>
</dbReference>
<dbReference type="GO" id="GO:0008270">
    <property type="term" value="F:zinc ion binding"/>
    <property type="evidence" value="ECO:0007669"/>
    <property type="project" value="UniProtKB-UniRule"/>
</dbReference>
<dbReference type="GO" id="GO:0030163">
    <property type="term" value="P:protein catabolic process"/>
    <property type="evidence" value="ECO:0007669"/>
    <property type="project" value="UniProtKB-UniRule"/>
</dbReference>
<dbReference type="GO" id="GO:0006508">
    <property type="term" value="P:proteolysis"/>
    <property type="evidence" value="ECO:0007669"/>
    <property type="project" value="UniProtKB-KW"/>
</dbReference>
<dbReference type="CDD" id="cd19501">
    <property type="entry name" value="RecA-like_FtsH"/>
    <property type="match status" value="1"/>
</dbReference>
<dbReference type="FunFam" id="1.10.8.60:FF:000001">
    <property type="entry name" value="ATP-dependent zinc metalloprotease FtsH"/>
    <property type="match status" value="1"/>
</dbReference>
<dbReference type="FunFam" id="1.20.58.760:FF:000001">
    <property type="entry name" value="ATP-dependent zinc metalloprotease FtsH"/>
    <property type="match status" value="1"/>
</dbReference>
<dbReference type="FunFam" id="3.40.50.300:FF:000001">
    <property type="entry name" value="ATP-dependent zinc metalloprotease FtsH"/>
    <property type="match status" value="1"/>
</dbReference>
<dbReference type="Gene3D" id="1.10.8.60">
    <property type="match status" value="1"/>
</dbReference>
<dbReference type="Gene3D" id="3.40.50.300">
    <property type="entry name" value="P-loop containing nucleotide triphosphate hydrolases"/>
    <property type="match status" value="1"/>
</dbReference>
<dbReference type="Gene3D" id="1.20.58.760">
    <property type="entry name" value="Peptidase M41"/>
    <property type="match status" value="1"/>
</dbReference>
<dbReference type="HAMAP" id="MF_01458">
    <property type="entry name" value="FtsH"/>
    <property type="match status" value="1"/>
</dbReference>
<dbReference type="InterPro" id="IPR003593">
    <property type="entry name" value="AAA+_ATPase"/>
</dbReference>
<dbReference type="InterPro" id="IPR041569">
    <property type="entry name" value="AAA_lid_3"/>
</dbReference>
<dbReference type="InterPro" id="IPR003959">
    <property type="entry name" value="ATPase_AAA_core"/>
</dbReference>
<dbReference type="InterPro" id="IPR003960">
    <property type="entry name" value="ATPase_AAA_CS"/>
</dbReference>
<dbReference type="InterPro" id="IPR005936">
    <property type="entry name" value="FtsH"/>
</dbReference>
<dbReference type="InterPro" id="IPR027417">
    <property type="entry name" value="P-loop_NTPase"/>
</dbReference>
<dbReference type="InterPro" id="IPR000642">
    <property type="entry name" value="Peptidase_M41"/>
</dbReference>
<dbReference type="InterPro" id="IPR037219">
    <property type="entry name" value="Peptidase_M41-like"/>
</dbReference>
<dbReference type="NCBIfam" id="TIGR01241">
    <property type="entry name" value="FtsH_fam"/>
    <property type="match status" value="1"/>
</dbReference>
<dbReference type="PANTHER" id="PTHR23076:SF97">
    <property type="entry name" value="ATP-DEPENDENT ZINC METALLOPROTEASE YME1L1"/>
    <property type="match status" value="1"/>
</dbReference>
<dbReference type="PANTHER" id="PTHR23076">
    <property type="entry name" value="METALLOPROTEASE M41 FTSH"/>
    <property type="match status" value="1"/>
</dbReference>
<dbReference type="Pfam" id="PF00004">
    <property type="entry name" value="AAA"/>
    <property type="match status" value="1"/>
</dbReference>
<dbReference type="Pfam" id="PF17862">
    <property type="entry name" value="AAA_lid_3"/>
    <property type="match status" value="1"/>
</dbReference>
<dbReference type="Pfam" id="PF01434">
    <property type="entry name" value="Peptidase_M41"/>
    <property type="match status" value="1"/>
</dbReference>
<dbReference type="SMART" id="SM00382">
    <property type="entry name" value="AAA"/>
    <property type="match status" value="1"/>
</dbReference>
<dbReference type="SUPFAM" id="SSF140990">
    <property type="entry name" value="FtsH protease domain-like"/>
    <property type="match status" value="1"/>
</dbReference>
<dbReference type="SUPFAM" id="SSF52540">
    <property type="entry name" value="P-loop containing nucleoside triphosphate hydrolases"/>
    <property type="match status" value="1"/>
</dbReference>
<dbReference type="PROSITE" id="PS00674">
    <property type="entry name" value="AAA"/>
    <property type="match status" value="1"/>
</dbReference>
<accession>B3QZS3</accession>